<sequence length="665" mass="75764">MVDVLAHESELLGLVKEYLDFAEFEDTLKTFLKECKIKGKPLSKSTCGSLRDPKSLKFQRDLLAAFDSGDQKVFFRLWEEHIPRPIRDGDSLAQKLEFYLHIHFAIYLLKHSAGRPDKEDLDERISYFKTFLETKGAALSQTTEFLPFYALPFVPNPMAHPSFKELFQDSWTSELKLKLEKFLALMFKASNTPKLLTLYKENGQSNKDVLQQLHQQLVEAERRSMTYLKRYNRIQADYHNLIGVTAELVDSLEATVSGKMITPEYLQSVCVRLFSNQMRQSLAHSVDFTRPGTASTMLRASLAPVKLKDVPLLPSLDYEKLKKDLILGSDRLKAFLLQALRWRLTTSHPGEQRETVLQAYISNDLLDCHSHSQRSVLQLLQSKSEVVRQYTARLINAFASLAEGRRYLAQSTKVLRMLEERLKEEDKDVITRENVLGALQKFSLRRPLQTAMIQDGLIFWLIDILKEPDCLSDYTLEYSVALLMNLCLRSAGKNMCAKVAGLVLKVLSDLLGHENHEIQPYVNGALYSILSIPSIREEARAMGMEDILRCFIKEGNAEMIRQIEFIIKQLNAEELLDGVLESDDDEDEDDEEDHDTMEADLDKDELIQPQLGELSGEKLLTTEYLGIMTNTGKARRRGTAGVQWGGPEPLRRPVTPGGHRTGYPA</sequence>
<feature type="chain" id="PRO_0000280594" description="LisH domain-containing protein ARMC9">
    <location>
        <begin position="1"/>
        <end position="665"/>
    </location>
</feature>
<feature type="domain" description="LisH" evidence="5">
    <location>
        <begin position="7"/>
        <end position="39"/>
    </location>
</feature>
<feature type="region of interest" description="Disordered" evidence="6">
    <location>
        <begin position="582"/>
        <end position="604"/>
    </location>
</feature>
<feature type="region of interest" description="Disordered" evidence="6">
    <location>
        <begin position="636"/>
        <end position="665"/>
    </location>
</feature>
<feature type="coiled-coil region" evidence="4">
    <location>
        <begin position="204"/>
        <end position="235"/>
    </location>
</feature>
<feature type="compositionally biased region" description="Acidic residues" evidence="6">
    <location>
        <begin position="582"/>
        <end position="603"/>
    </location>
</feature>
<feature type="modified residue" description="Phosphoserine" evidence="2">
    <location>
        <position position="582"/>
    </location>
</feature>
<dbReference type="EMBL" id="BC112726">
    <property type="protein sequence ID" value="AAI12727.1"/>
    <property type="molecule type" value="mRNA"/>
</dbReference>
<dbReference type="RefSeq" id="NP_001039883.1">
    <property type="nucleotide sequence ID" value="NM_001046418.2"/>
</dbReference>
<dbReference type="SMR" id="Q2KI89"/>
<dbReference type="FunCoup" id="Q2KI89">
    <property type="interactions" value="22"/>
</dbReference>
<dbReference type="STRING" id="9913.ENSBTAP00000073031"/>
<dbReference type="PaxDb" id="9913-ENSBTAP00000024631"/>
<dbReference type="GeneID" id="536462"/>
<dbReference type="KEGG" id="bta:536462"/>
<dbReference type="CTD" id="80210"/>
<dbReference type="eggNOG" id="ENOG502QQ9W">
    <property type="taxonomic scope" value="Eukaryota"/>
</dbReference>
<dbReference type="HOGENOM" id="CLU_007962_1_0_1"/>
<dbReference type="InParanoid" id="Q2KI89"/>
<dbReference type="OrthoDB" id="538223at2759"/>
<dbReference type="TreeFam" id="TF317676"/>
<dbReference type="Proteomes" id="UP000009136">
    <property type="component" value="Unplaced"/>
</dbReference>
<dbReference type="GO" id="GO:0005814">
    <property type="term" value="C:centriole"/>
    <property type="evidence" value="ECO:0000250"/>
    <property type="project" value="UniProtKB"/>
</dbReference>
<dbReference type="GO" id="GO:0036064">
    <property type="term" value="C:ciliary basal body"/>
    <property type="evidence" value="ECO:0000250"/>
    <property type="project" value="UniProtKB"/>
</dbReference>
<dbReference type="GO" id="GO:0097542">
    <property type="term" value="C:ciliary tip"/>
    <property type="evidence" value="ECO:0000250"/>
    <property type="project" value="UniProtKB"/>
</dbReference>
<dbReference type="GO" id="GO:0005929">
    <property type="term" value="C:cilium"/>
    <property type="evidence" value="ECO:0000250"/>
    <property type="project" value="UniProtKB"/>
</dbReference>
<dbReference type="GO" id="GO:0005737">
    <property type="term" value="C:cytoplasm"/>
    <property type="evidence" value="ECO:0007669"/>
    <property type="project" value="UniProtKB-KW"/>
</dbReference>
<dbReference type="GO" id="GO:0060271">
    <property type="term" value="P:cilium assembly"/>
    <property type="evidence" value="ECO:0000250"/>
    <property type="project" value="UniProtKB"/>
</dbReference>
<dbReference type="GO" id="GO:0045880">
    <property type="term" value="P:positive regulation of smoothened signaling pathway"/>
    <property type="evidence" value="ECO:0000250"/>
    <property type="project" value="UniProtKB"/>
</dbReference>
<dbReference type="FunFam" id="1.25.10.10:FF:000124">
    <property type="entry name" value="lisH domain-containing protein ARMC9 isoform X1"/>
    <property type="match status" value="1"/>
</dbReference>
<dbReference type="Gene3D" id="1.25.10.10">
    <property type="entry name" value="Leucine-rich Repeat Variant"/>
    <property type="match status" value="1"/>
</dbReference>
<dbReference type="InterPro" id="IPR011989">
    <property type="entry name" value="ARM-like"/>
</dbReference>
<dbReference type="InterPro" id="IPR016024">
    <property type="entry name" value="ARM-type_fold"/>
</dbReference>
<dbReference type="InterPro" id="IPR040369">
    <property type="entry name" value="ARMC9"/>
</dbReference>
<dbReference type="InterPro" id="IPR048959">
    <property type="entry name" value="ARMC9_ARM_dom"/>
</dbReference>
<dbReference type="InterPro" id="IPR056327">
    <property type="entry name" value="ARMC9_CTLH-like_dom"/>
</dbReference>
<dbReference type="InterPro" id="IPR048957">
    <property type="entry name" value="ARMC9_LisH"/>
</dbReference>
<dbReference type="InterPro" id="IPR006594">
    <property type="entry name" value="LisH"/>
</dbReference>
<dbReference type="PANTHER" id="PTHR14881">
    <property type="entry name" value="LISH DOMAIN-CONTAINING PROTEIN ARMC9"/>
    <property type="match status" value="1"/>
</dbReference>
<dbReference type="PANTHER" id="PTHR14881:SF4">
    <property type="entry name" value="LISH DOMAIN-CONTAINING PROTEIN ARMC9"/>
    <property type="match status" value="1"/>
</dbReference>
<dbReference type="Pfam" id="PF21050">
    <property type="entry name" value="ARMC9_ARM"/>
    <property type="match status" value="1"/>
</dbReference>
<dbReference type="Pfam" id="PF21051">
    <property type="entry name" value="ARMC9_LisH"/>
    <property type="match status" value="1"/>
</dbReference>
<dbReference type="Pfam" id="PF23138">
    <property type="entry name" value="CTLH_Armc9"/>
    <property type="match status" value="1"/>
</dbReference>
<dbReference type="SMART" id="SM00667">
    <property type="entry name" value="LisH"/>
    <property type="match status" value="1"/>
</dbReference>
<dbReference type="SUPFAM" id="SSF48371">
    <property type="entry name" value="ARM repeat"/>
    <property type="match status" value="1"/>
</dbReference>
<dbReference type="PROSITE" id="PS50896">
    <property type="entry name" value="LISH"/>
    <property type="match status" value="1"/>
</dbReference>
<protein>
    <recommendedName>
        <fullName>LisH domain-containing protein ARMC9</fullName>
    </recommendedName>
</protein>
<reference key="1">
    <citation type="submission" date="2006-01" db="EMBL/GenBank/DDBJ databases">
        <authorList>
            <consortium name="NIH - Mammalian Gene Collection (MGC) project"/>
        </authorList>
    </citation>
    <scope>NUCLEOTIDE SEQUENCE [LARGE SCALE MRNA]</scope>
    <source>
        <strain>Hereford</strain>
        <tissue>Hypothalamus</tissue>
    </source>
</reference>
<evidence type="ECO:0000250" key="1">
    <source>
        <dbReference type="UniProtKB" id="E7F187"/>
    </source>
</evidence>
<evidence type="ECO:0000250" key="2">
    <source>
        <dbReference type="UniProtKB" id="Q7Z3E5"/>
    </source>
</evidence>
<evidence type="ECO:0000250" key="3">
    <source>
        <dbReference type="UniProtKB" id="Q9D2I5"/>
    </source>
</evidence>
<evidence type="ECO:0000255" key="4"/>
<evidence type="ECO:0000255" key="5">
    <source>
        <dbReference type="PROSITE-ProRule" id="PRU00126"/>
    </source>
</evidence>
<evidence type="ECO:0000256" key="6">
    <source>
        <dbReference type="SAM" id="MobiDB-lite"/>
    </source>
</evidence>
<proteinExistence type="evidence at transcript level"/>
<organism>
    <name type="scientific">Bos taurus</name>
    <name type="common">Bovine</name>
    <dbReference type="NCBI Taxonomy" id="9913"/>
    <lineage>
        <taxon>Eukaryota</taxon>
        <taxon>Metazoa</taxon>
        <taxon>Chordata</taxon>
        <taxon>Craniata</taxon>
        <taxon>Vertebrata</taxon>
        <taxon>Euteleostomi</taxon>
        <taxon>Mammalia</taxon>
        <taxon>Eutheria</taxon>
        <taxon>Laurasiatheria</taxon>
        <taxon>Artiodactyla</taxon>
        <taxon>Ruminantia</taxon>
        <taxon>Pecora</taxon>
        <taxon>Bovidae</taxon>
        <taxon>Bovinae</taxon>
        <taxon>Bos</taxon>
    </lineage>
</organism>
<name>ARMC9_BOVIN</name>
<gene>
    <name type="primary">ARMC9</name>
</gene>
<comment type="function">
    <text evidence="1 2 3">Involved in ciliogenesis. It is required for appropriate acetylation and polyglutamylation of ciliary microtubules, and regulation of cilium length (By similarity). Acts as a positive regulator of hedgehog (Hh)signaling (By similarity). May participate in the trafficking and/or retention of GLI2 and GLI3 proteins at the ciliary tip (By similarity).</text>
</comment>
<comment type="subunit">
    <text evidence="2">Interacts with TOGARAM1, CCDC66, CEP104, CSPP1 and CEP290. Interacts with NDUFAF2 (By similarity).</text>
</comment>
<comment type="subcellular location">
    <subcellularLocation>
        <location evidence="2">Cytoplasm</location>
        <location evidence="2">Cytoskeleton</location>
        <location evidence="2">Cilium basal body</location>
    </subcellularLocation>
    <subcellularLocation>
        <location evidence="3">Cell projection</location>
        <location evidence="3">Cilium</location>
    </subcellularLocation>
    <subcellularLocation>
        <location evidence="2">Cytoplasm</location>
        <location evidence="2">Cytoskeleton</location>
        <location evidence="2">Microtubule organizing center</location>
        <location evidence="2">Centrosome</location>
        <location evidence="2">Centriole</location>
    </subcellularLocation>
    <text evidence="2 3">Localized to the proximal region in cilia. Stimulation of Hh signaling leads to redistribution of ARMC9 toward the ciliary tip within 6 hours, follow by a gradual return to its original proximal location (By similarity). Localizes to the daughter centriole of the primary cilium in RPE1 cells (By similarity).</text>
</comment>
<accession>Q2KI89</accession>
<keyword id="KW-0966">Cell projection</keyword>
<keyword id="KW-0970">Cilium biogenesis/degradation</keyword>
<keyword id="KW-0175">Coiled coil</keyword>
<keyword id="KW-0963">Cytoplasm</keyword>
<keyword id="KW-0206">Cytoskeleton</keyword>
<keyword id="KW-0597">Phosphoprotein</keyword>
<keyword id="KW-1185">Reference proteome</keyword>